<dbReference type="EC" id="3.6.5.3" evidence="2"/>
<dbReference type="EMBL" id="CP001103">
    <property type="protein sequence ID" value="AEA99831.1"/>
    <property type="molecule type" value="Genomic_DNA"/>
</dbReference>
<dbReference type="RefSeq" id="WP_012519826.1">
    <property type="nucleotide sequence ID" value="NC_011138.3"/>
</dbReference>
<dbReference type="SMR" id="B4RYQ8"/>
<dbReference type="KEGG" id="amc:MADE_1018535"/>
<dbReference type="HOGENOM" id="CLU_007265_0_0_6"/>
<dbReference type="Proteomes" id="UP000001870">
    <property type="component" value="Chromosome"/>
</dbReference>
<dbReference type="GO" id="GO:0005829">
    <property type="term" value="C:cytosol"/>
    <property type="evidence" value="ECO:0007669"/>
    <property type="project" value="TreeGrafter"/>
</dbReference>
<dbReference type="GO" id="GO:0005525">
    <property type="term" value="F:GTP binding"/>
    <property type="evidence" value="ECO:0007669"/>
    <property type="project" value="UniProtKB-UniRule"/>
</dbReference>
<dbReference type="GO" id="GO:0003924">
    <property type="term" value="F:GTPase activity"/>
    <property type="evidence" value="ECO:0007669"/>
    <property type="project" value="InterPro"/>
</dbReference>
<dbReference type="GO" id="GO:0097216">
    <property type="term" value="F:guanosine tetraphosphate binding"/>
    <property type="evidence" value="ECO:0007669"/>
    <property type="project" value="UniProtKB-ARBA"/>
</dbReference>
<dbReference type="GO" id="GO:0003746">
    <property type="term" value="F:translation elongation factor activity"/>
    <property type="evidence" value="ECO:0007669"/>
    <property type="project" value="UniProtKB-UniRule"/>
</dbReference>
<dbReference type="CDD" id="cd01884">
    <property type="entry name" value="EF_Tu"/>
    <property type="match status" value="1"/>
</dbReference>
<dbReference type="CDD" id="cd03697">
    <property type="entry name" value="EFTU_II"/>
    <property type="match status" value="1"/>
</dbReference>
<dbReference type="CDD" id="cd03707">
    <property type="entry name" value="EFTU_III"/>
    <property type="match status" value="1"/>
</dbReference>
<dbReference type="FunFam" id="2.40.30.10:FF:000001">
    <property type="entry name" value="Elongation factor Tu"/>
    <property type="match status" value="1"/>
</dbReference>
<dbReference type="FunFam" id="3.40.50.300:FF:000003">
    <property type="entry name" value="Elongation factor Tu"/>
    <property type="match status" value="1"/>
</dbReference>
<dbReference type="Gene3D" id="3.40.50.300">
    <property type="entry name" value="P-loop containing nucleotide triphosphate hydrolases"/>
    <property type="match status" value="1"/>
</dbReference>
<dbReference type="Gene3D" id="2.40.30.10">
    <property type="entry name" value="Translation factors"/>
    <property type="match status" value="2"/>
</dbReference>
<dbReference type="HAMAP" id="MF_00118_B">
    <property type="entry name" value="EF_Tu_B"/>
    <property type="match status" value="1"/>
</dbReference>
<dbReference type="InterPro" id="IPR041709">
    <property type="entry name" value="EF-Tu_GTP-bd"/>
</dbReference>
<dbReference type="InterPro" id="IPR050055">
    <property type="entry name" value="EF-Tu_GTPase"/>
</dbReference>
<dbReference type="InterPro" id="IPR004161">
    <property type="entry name" value="EFTu-like_2"/>
</dbReference>
<dbReference type="InterPro" id="IPR033720">
    <property type="entry name" value="EFTU_2"/>
</dbReference>
<dbReference type="InterPro" id="IPR031157">
    <property type="entry name" value="G_TR_CS"/>
</dbReference>
<dbReference type="InterPro" id="IPR027417">
    <property type="entry name" value="P-loop_NTPase"/>
</dbReference>
<dbReference type="InterPro" id="IPR005225">
    <property type="entry name" value="Small_GTP-bd"/>
</dbReference>
<dbReference type="InterPro" id="IPR000795">
    <property type="entry name" value="T_Tr_GTP-bd_dom"/>
</dbReference>
<dbReference type="InterPro" id="IPR009000">
    <property type="entry name" value="Transl_B-barrel_sf"/>
</dbReference>
<dbReference type="InterPro" id="IPR009001">
    <property type="entry name" value="Transl_elong_EF1A/Init_IF2_C"/>
</dbReference>
<dbReference type="InterPro" id="IPR004541">
    <property type="entry name" value="Transl_elong_EFTu/EF1A_bac/org"/>
</dbReference>
<dbReference type="InterPro" id="IPR004160">
    <property type="entry name" value="Transl_elong_EFTu/EF1A_C"/>
</dbReference>
<dbReference type="NCBIfam" id="TIGR00485">
    <property type="entry name" value="EF-Tu"/>
    <property type="match status" value="1"/>
</dbReference>
<dbReference type="NCBIfam" id="NF000766">
    <property type="entry name" value="PRK00049.1"/>
    <property type="match status" value="1"/>
</dbReference>
<dbReference type="NCBIfam" id="NF009372">
    <property type="entry name" value="PRK12735.1"/>
    <property type="match status" value="1"/>
</dbReference>
<dbReference type="NCBIfam" id="NF009373">
    <property type="entry name" value="PRK12736.1"/>
    <property type="match status" value="1"/>
</dbReference>
<dbReference type="NCBIfam" id="TIGR00231">
    <property type="entry name" value="small_GTP"/>
    <property type="match status" value="1"/>
</dbReference>
<dbReference type="PANTHER" id="PTHR43721:SF22">
    <property type="entry name" value="ELONGATION FACTOR TU, MITOCHONDRIAL"/>
    <property type="match status" value="1"/>
</dbReference>
<dbReference type="PANTHER" id="PTHR43721">
    <property type="entry name" value="ELONGATION FACTOR TU-RELATED"/>
    <property type="match status" value="1"/>
</dbReference>
<dbReference type="Pfam" id="PF00009">
    <property type="entry name" value="GTP_EFTU"/>
    <property type="match status" value="1"/>
</dbReference>
<dbReference type="Pfam" id="PF03144">
    <property type="entry name" value="GTP_EFTU_D2"/>
    <property type="match status" value="1"/>
</dbReference>
<dbReference type="Pfam" id="PF03143">
    <property type="entry name" value="GTP_EFTU_D3"/>
    <property type="match status" value="1"/>
</dbReference>
<dbReference type="PRINTS" id="PR00315">
    <property type="entry name" value="ELONGATNFCT"/>
</dbReference>
<dbReference type="SUPFAM" id="SSF50465">
    <property type="entry name" value="EF-Tu/eEF-1alpha/eIF2-gamma C-terminal domain"/>
    <property type="match status" value="1"/>
</dbReference>
<dbReference type="SUPFAM" id="SSF52540">
    <property type="entry name" value="P-loop containing nucleoside triphosphate hydrolases"/>
    <property type="match status" value="1"/>
</dbReference>
<dbReference type="SUPFAM" id="SSF50447">
    <property type="entry name" value="Translation proteins"/>
    <property type="match status" value="1"/>
</dbReference>
<dbReference type="PROSITE" id="PS00301">
    <property type="entry name" value="G_TR_1"/>
    <property type="match status" value="1"/>
</dbReference>
<dbReference type="PROSITE" id="PS51722">
    <property type="entry name" value="G_TR_2"/>
    <property type="match status" value="1"/>
</dbReference>
<feature type="chain" id="PRO_1000095046" description="Elongation factor Tu">
    <location>
        <begin position="1"/>
        <end position="394"/>
    </location>
</feature>
<feature type="domain" description="tr-type G">
    <location>
        <begin position="10"/>
        <end position="204"/>
    </location>
</feature>
<feature type="region of interest" description="G1" evidence="1">
    <location>
        <begin position="19"/>
        <end position="26"/>
    </location>
</feature>
<feature type="region of interest" description="G2" evidence="1">
    <location>
        <begin position="60"/>
        <end position="64"/>
    </location>
</feature>
<feature type="region of interest" description="G3" evidence="1">
    <location>
        <begin position="81"/>
        <end position="84"/>
    </location>
</feature>
<feature type="region of interest" description="G4" evidence="1">
    <location>
        <begin position="136"/>
        <end position="139"/>
    </location>
</feature>
<feature type="region of interest" description="G5" evidence="1">
    <location>
        <begin position="174"/>
        <end position="176"/>
    </location>
</feature>
<feature type="binding site" evidence="2">
    <location>
        <begin position="19"/>
        <end position="26"/>
    </location>
    <ligand>
        <name>GTP</name>
        <dbReference type="ChEBI" id="CHEBI:37565"/>
    </ligand>
</feature>
<feature type="binding site" evidence="2">
    <location>
        <position position="26"/>
    </location>
    <ligand>
        <name>Mg(2+)</name>
        <dbReference type="ChEBI" id="CHEBI:18420"/>
    </ligand>
</feature>
<feature type="binding site" evidence="2">
    <location>
        <begin position="81"/>
        <end position="85"/>
    </location>
    <ligand>
        <name>GTP</name>
        <dbReference type="ChEBI" id="CHEBI:37565"/>
    </ligand>
</feature>
<feature type="binding site" evidence="2">
    <location>
        <begin position="136"/>
        <end position="139"/>
    </location>
    <ligand>
        <name>GTP</name>
        <dbReference type="ChEBI" id="CHEBI:37565"/>
    </ligand>
</feature>
<comment type="function">
    <text evidence="2">GTP hydrolase that promotes the GTP-dependent binding of aminoacyl-tRNA to the A-site of ribosomes during protein biosynthesis.</text>
</comment>
<comment type="catalytic activity">
    <reaction evidence="2">
        <text>GTP + H2O = GDP + phosphate + H(+)</text>
        <dbReference type="Rhea" id="RHEA:19669"/>
        <dbReference type="ChEBI" id="CHEBI:15377"/>
        <dbReference type="ChEBI" id="CHEBI:15378"/>
        <dbReference type="ChEBI" id="CHEBI:37565"/>
        <dbReference type="ChEBI" id="CHEBI:43474"/>
        <dbReference type="ChEBI" id="CHEBI:58189"/>
        <dbReference type="EC" id="3.6.5.3"/>
    </reaction>
    <physiologicalReaction direction="left-to-right" evidence="2">
        <dbReference type="Rhea" id="RHEA:19670"/>
    </physiologicalReaction>
</comment>
<comment type="subunit">
    <text evidence="2">Monomer.</text>
</comment>
<comment type="subcellular location">
    <subcellularLocation>
        <location evidence="2">Cytoplasm</location>
    </subcellularLocation>
</comment>
<comment type="similarity">
    <text evidence="2">Belongs to the TRAFAC class translation factor GTPase superfamily. Classic translation factor GTPase family. EF-Tu/EF-1A subfamily.</text>
</comment>
<reference key="1">
    <citation type="journal article" date="2008" name="ISME J.">
        <title>Comparative genomics of two ecotypes of the marine planktonic copiotroph Alteromonas macleodii suggests alternative lifestyles associated with different kinds of particulate organic matter.</title>
        <authorList>
            <person name="Ivars-Martinez E."/>
            <person name="Martin-Cuadrado A.-B."/>
            <person name="D'Auria G."/>
            <person name="Mira A."/>
            <person name="Ferriera S."/>
            <person name="Johnson J."/>
            <person name="Friedman R."/>
            <person name="Rodriguez-Valera F."/>
        </authorList>
    </citation>
    <scope>NUCLEOTIDE SEQUENCE [LARGE SCALE GENOMIC DNA]</scope>
    <source>
        <strain>DSM 17117 / CIP 110805 / LMG 28347 / Deep ecotype</strain>
    </source>
</reference>
<sequence length="394" mass="43224">MAKEKFERTKPHVNVGTIGHVDHGKTTLTAAITTVLSKTYGGSAQAFDQIDNAPEEKARGITISTSHVEYDTPTRHYAHVDCPGHADYVKNMITGAAQMDGGILVVAATDGPMPQTREHILLGRQVGIPYIIVFMNKCDMVDDEELLELVEMEVRELLNEYEFPGDDLPVIQGSALKALEGDAEWEKKIIELGEALDSYIPEPERAIDKPFILPIEDVFSISGRGTVVTGRVEQGIIKVGEEVEIVGIKDTTKTTCTGVEMFRKLLDEGRAGENVGVLLRGTKRDEVERGQVLAKPGSITPHVNFEAEVYVLSKDEGGRHTPFFKGYRPQFYFRTTDVTGAVELPEGVEMVMPGDNLKFKVELIAPIAMEEGLRFAIREGGRTVGAGVVSKILD</sequence>
<proteinExistence type="inferred from homology"/>
<keyword id="KW-0963">Cytoplasm</keyword>
<keyword id="KW-0251">Elongation factor</keyword>
<keyword id="KW-0342">GTP-binding</keyword>
<keyword id="KW-0378">Hydrolase</keyword>
<keyword id="KW-0460">Magnesium</keyword>
<keyword id="KW-0479">Metal-binding</keyword>
<keyword id="KW-0547">Nucleotide-binding</keyword>
<keyword id="KW-0648">Protein biosynthesis</keyword>
<protein>
    <recommendedName>
        <fullName evidence="2">Elongation factor Tu</fullName>
        <shortName evidence="2">EF-Tu</shortName>
        <ecNumber evidence="2">3.6.5.3</ecNumber>
    </recommendedName>
</protein>
<organism>
    <name type="scientific">Alteromonas mediterranea (strain DSM 17117 / CIP 110805 / LMG 28347 / Deep ecotype)</name>
    <dbReference type="NCBI Taxonomy" id="1774373"/>
    <lineage>
        <taxon>Bacteria</taxon>
        <taxon>Pseudomonadati</taxon>
        <taxon>Pseudomonadota</taxon>
        <taxon>Gammaproteobacteria</taxon>
        <taxon>Alteromonadales</taxon>
        <taxon>Alteromonadaceae</taxon>
        <taxon>Alteromonas/Salinimonas group</taxon>
        <taxon>Alteromonas</taxon>
    </lineage>
</organism>
<evidence type="ECO:0000250" key="1"/>
<evidence type="ECO:0000255" key="2">
    <source>
        <dbReference type="HAMAP-Rule" id="MF_00118"/>
    </source>
</evidence>
<accession>B4RYQ8</accession>
<accession>F2G665</accession>
<gene>
    <name evidence="2" type="primary">tuf</name>
    <name type="ordered locus">MADE_1018535</name>
</gene>
<name>EFTU_ALTMD</name>